<sequence>MSAISSRNQKMEQQRQLMEAYIRQKRASPGMVQASDLQISRPMSGMRSNSRELHAYDGPMQFISSPHNPDQILTNGSPVGGTVAMNSTRNHSNNMRTLSTISQEADLIEEISSHELEDEESSPVTVIEQQQTAPHSANSTHSQRPSTTRQPSFNDTLDEDDYTNRNIAGAAPVRPVGLASSPYKEAGLDGSSMETSNGAGGESEGDVIGNIDQFVMQPAPQGVLYKCRITRDRKGMDRGLFPIYYLHLERDYGKKIFLLGGRKRKKSKTSNYIVSCDPTDLSRSADGFCGKLRSNVFGTSFTVFDSGNKDSTDSPRLDLAVIIYDTNILGFKGPRNMTVILPGMTEDDQRVKISSADPKQTGILDLYKMKNMDNIVELHNKTPVWNDETQSYVLNFHGRVTQASVKNFQLVHDSDPEYIVMQFGRTSEDVFTMDYRYPLCAMQAFAIALSSFDGKIACE</sequence>
<protein>
    <recommendedName>
        <fullName evidence="1">Protein king tubby</fullName>
    </recommendedName>
</protein>
<name>TULP_DROPE</name>
<feature type="chain" id="PRO_0000400840" description="Protein king tubby">
    <location>
        <begin position="1"/>
        <end position="459"/>
    </location>
</feature>
<feature type="region of interest" description="Disordered" evidence="3">
    <location>
        <begin position="114"/>
        <end position="205"/>
    </location>
</feature>
<feature type="compositionally biased region" description="Polar residues" evidence="3">
    <location>
        <begin position="123"/>
        <end position="155"/>
    </location>
</feature>
<feature type="modified residue" description="Phosphoserine" evidence="1">
    <location>
        <position position="152"/>
    </location>
</feature>
<proteinExistence type="inferred from homology"/>
<keyword id="KW-1003">Cell membrane</keyword>
<keyword id="KW-0966">Cell projection</keyword>
<keyword id="KW-0963">Cytoplasm</keyword>
<keyword id="KW-0472">Membrane</keyword>
<keyword id="KW-0539">Nucleus</keyword>
<keyword id="KW-0597">Phosphoprotein</keyword>
<keyword id="KW-1185">Reference proteome</keyword>
<reference evidence="4" key="1">
    <citation type="journal article" date="2007" name="Nature">
        <title>Evolution of genes and genomes on the Drosophila phylogeny.</title>
        <authorList>
            <consortium name="Drosophila 12 genomes consortium"/>
        </authorList>
    </citation>
    <scope>NUCLEOTIDE SEQUENCE [LARGE SCALE GENOMIC DNA]</scope>
    <source>
        <strain evidence="4">MSH-3 / Tucson 14011-0111.49</strain>
    </source>
</reference>
<gene>
    <name evidence="1" type="primary">king-tubby</name>
    <name type="ORF">GL10151</name>
</gene>
<comment type="subcellular location">
    <subcellularLocation>
        <location evidence="1">Cytoplasm</location>
    </subcellularLocation>
    <subcellularLocation>
        <location evidence="1">Nucleus</location>
    </subcellularLocation>
    <subcellularLocation>
        <location evidence="1">Cell projection</location>
        <location evidence="1">Cilium membrane</location>
        <topology evidence="1">Peripheral membrane protein</topology>
    </subcellularLocation>
    <subcellularLocation>
        <location evidence="1">Cell projection</location>
        <location evidence="1">Rhabdomere</location>
    </subcellularLocation>
</comment>
<comment type="similarity">
    <text evidence="2">Belongs to the TUB family.</text>
</comment>
<organism>
    <name type="scientific">Drosophila persimilis</name>
    <name type="common">Fruit fly</name>
    <dbReference type="NCBI Taxonomy" id="7234"/>
    <lineage>
        <taxon>Eukaryota</taxon>
        <taxon>Metazoa</taxon>
        <taxon>Ecdysozoa</taxon>
        <taxon>Arthropoda</taxon>
        <taxon>Hexapoda</taxon>
        <taxon>Insecta</taxon>
        <taxon>Pterygota</taxon>
        <taxon>Neoptera</taxon>
        <taxon>Endopterygota</taxon>
        <taxon>Diptera</taxon>
        <taxon>Brachycera</taxon>
        <taxon>Muscomorpha</taxon>
        <taxon>Ephydroidea</taxon>
        <taxon>Drosophilidae</taxon>
        <taxon>Drosophila</taxon>
        <taxon>Sophophora</taxon>
    </lineage>
</organism>
<evidence type="ECO:0000250" key="1">
    <source>
        <dbReference type="UniProtKB" id="Q86PC9"/>
    </source>
</evidence>
<evidence type="ECO:0000255" key="2"/>
<evidence type="ECO:0000256" key="3">
    <source>
        <dbReference type="SAM" id="MobiDB-lite"/>
    </source>
</evidence>
<evidence type="ECO:0000312" key="4">
    <source>
        <dbReference type="EMBL" id="EDW32806.1"/>
    </source>
</evidence>
<dbReference type="EMBL" id="CH479210">
    <property type="protein sequence ID" value="EDW32806.1"/>
    <property type="molecule type" value="Genomic_DNA"/>
</dbReference>
<dbReference type="SMR" id="B4H4X0"/>
<dbReference type="STRING" id="7234.B4H4X0"/>
<dbReference type="EnsemblMetazoa" id="FBtr0175766">
    <property type="protein sequence ID" value="FBpp0174258"/>
    <property type="gene ID" value="FBgn0147761"/>
</dbReference>
<dbReference type="EnsemblMetazoa" id="XM_002025863.2">
    <property type="protein sequence ID" value="XP_002025899.1"/>
    <property type="gene ID" value="LOC6600864"/>
</dbReference>
<dbReference type="GeneID" id="6600864"/>
<dbReference type="KEGG" id="dpe:6600864"/>
<dbReference type="CTD" id="37400"/>
<dbReference type="eggNOG" id="KOG2502">
    <property type="taxonomic scope" value="Eukaryota"/>
</dbReference>
<dbReference type="HOGENOM" id="CLU_028236_1_1_1"/>
<dbReference type="OMA" id="GYDGPMQ"/>
<dbReference type="OrthoDB" id="8775810at2759"/>
<dbReference type="PhylomeDB" id="B4H4X0"/>
<dbReference type="ChiTaRS" id="ktub">
    <property type="organism name" value="fly"/>
</dbReference>
<dbReference type="Proteomes" id="UP000008744">
    <property type="component" value="Unassembled WGS sequence"/>
</dbReference>
<dbReference type="GO" id="GO:0060170">
    <property type="term" value="C:ciliary membrane"/>
    <property type="evidence" value="ECO:0007669"/>
    <property type="project" value="UniProtKB-SubCell"/>
</dbReference>
<dbReference type="GO" id="GO:0005737">
    <property type="term" value="C:cytoplasm"/>
    <property type="evidence" value="ECO:0000250"/>
    <property type="project" value="UniProtKB"/>
</dbReference>
<dbReference type="GO" id="GO:0005634">
    <property type="term" value="C:nucleus"/>
    <property type="evidence" value="ECO:0000250"/>
    <property type="project" value="UniProtKB"/>
</dbReference>
<dbReference type="GO" id="GO:0016028">
    <property type="term" value="C:rhabdomere"/>
    <property type="evidence" value="ECO:0007669"/>
    <property type="project" value="UniProtKB-SubCell"/>
</dbReference>
<dbReference type="GO" id="GO:0061512">
    <property type="term" value="P:protein localization to cilium"/>
    <property type="evidence" value="ECO:0007669"/>
    <property type="project" value="TreeGrafter"/>
</dbReference>
<dbReference type="FunFam" id="3.20.90.10:FF:000001">
    <property type="entry name" value="Tubby-like protein"/>
    <property type="match status" value="1"/>
</dbReference>
<dbReference type="Gene3D" id="3.20.90.10">
    <property type="entry name" value="Tubby Protein, Chain A"/>
    <property type="match status" value="1"/>
</dbReference>
<dbReference type="InterPro" id="IPR025659">
    <property type="entry name" value="Tubby-like_C"/>
</dbReference>
<dbReference type="InterPro" id="IPR000007">
    <property type="entry name" value="Tubby_C"/>
</dbReference>
<dbReference type="InterPro" id="IPR018066">
    <property type="entry name" value="Tubby_C_CS"/>
</dbReference>
<dbReference type="PANTHER" id="PTHR16517:SF7">
    <property type="entry name" value="PROTEIN KING TUBBY"/>
    <property type="match status" value="1"/>
</dbReference>
<dbReference type="PANTHER" id="PTHR16517">
    <property type="entry name" value="TUBBY-RELATED"/>
    <property type="match status" value="1"/>
</dbReference>
<dbReference type="Pfam" id="PF01167">
    <property type="entry name" value="Tub"/>
    <property type="match status" value="1"/>
</dbReference>
<dbReference type="PRINTS" id="PR01573">
    <property type="entry name" value="SUPERTUBBY"/>
</dbReference>
<dbReference type="SUPFAM" id="SSF54518">
    <property type="entry name" value="Tubby C-terminal domain-like"/>
    <property type="match status" value="1"/>
</dbReference>
<dbReference type="PROSITE" id="PS01200">
    <property type="entry name" value="TUB_1"/>
    <property type="match status" value="1"/>
</dbReference>
<dbReference type="PROSITE" id="PS01201">
    <property type="entry name" value="TUB_2"/>
    <property type="match status" value="1"/>
</dbReference>
<accession>B4H4X0</accession>